<organism>
    <name type="scientific">Methanococcus maripaludis (strain C5 / ATCC BAA-1333)</name>
    <dbReference type="NCBI Taxonomy" id="402880"/>
    <lineage>
        <taxon>Archaea</taxon>
        <taxon>Methanobacteriati</taxon>
        <taxon>Methanobacteriota</taxon>
        <taxon>Methanomada group</taxon>
        <taxon>Methanococci</taxon>
        <taxon>Methanococcales</taxon>
        <taxon>Methanococcaceae</taxon>
        <taxon>Methanococcus</taxon>
    </lineage>
</organism>
<dbReference type="EC" id="2.1.1.177" evidence="1"/>
<dbReference type="EMBL" id="CP000609">
    <property type="protein sequence ID" value="ABO34870.1"/>
    <property type="molecule type" value="Genomic_DNA"/>
</dbReference>
<dbReference type="RefSeq" id="WP_011868324.1">
    <property type="nucleotide sequence ID" value="NC_009135.1"/>
</dbReference>
<dbReference type="SMR" id="A4FXE1"/>
<dbReference type="STRING" id="402880.MmarC5_0556"/>
<dbReference type="GeneID" id="4928101"/>
<dbReference type="KEGG" id="mmq:MmarC5_0556"/>
<dbReference type="eggNOG" id="arCOG05111">
    <property type="taxonomic scope" value="Archaea"/>
</dbReference>
<dbReference type="HOGENOM" id="CLU_100552_0_0_2"/>
<dbReference type="OrthoDB" id="111266at2157"/>
<dbReference type="Proteomes" id="UP000000253">
    <property type="component" value="Chromosome"/>
</dbReference>
<dbReference type="GO" id="GO:0005737">
    <property type="term" value="C:cytoplasm"/>
    <property type="evidence" value="ECO:0007669"/>
    <property type="project" value="UniProtKB-SubCell"/>
</dbReference>
<dbReference type="GO" id="GO:0070038">
    <property type="term" value="F:rRNA (pseudouridine-N3-)-methyltransferase activity"/>
    <property type="evidence" value="ECO:0007669"/>
    <property type="project" value="UniProtKB-UniRule"/>
</dbReference>
<dbReference type="CDD" id="cd18081">
    <property type="entry name" value="RlmH-like"/>
    <property type="match status" value="1"/>
</dbReference>
<dbReference type="Gene3D" id="3.40.1280.10">
    <property type="match status" value="1"/>
</dbReference>
<dbReference type="HAMAP" id="MF_00658">
    <property type="entry name" value="23SrRNA_methyltr_H"/>
    <property type="match status" value="1"/>
</dbReference>
<dbReference type="InterPro" id="IPR029028">
    <property type="entry name" value="Alpha/beta_knot_MTases"/>
</dbReference>
<dbReference type="InterPro" id="IPR003742">
    <property type="entry name" value="RlmH-like"/>
</dbReference>
<dbReference type="InterPro" id="IPR029026">
    <property type="entry name" value="tRNA_m1G_MTases_N"/>
</dbReference>
<dbReference type="NCBIfam" id="NF000985">
    <property type="entry name" value="PRK00103.1-3"/>
    <property type="match status" value="1"/>
</dbReference>
<dbReference type="NCBIfam" id="TIGR00246">
    <property type="entry name" value="tRNA_RlmH_YbeA"/>
    <property type="match status" value="1"/>
</dbReference>
<dbReference type="PANTHER" id="PTHR33603">
    <property type="entry name" value="METHYLTRANSFERASE"/>
    <property type="match status" value="1"/>
</dbReference>
<dbReference type="PANTHER" id="PTHR33603:SF1">
    <property type="entry name" value="RIBOSOMAL RNA LARGE SUBUNIT METHYLTRANSFERASE H"/>
    <property type="match status" value="1"/>
</dbReference>
<dbReference type="Pfam" id="PF02590">
    <property type="entry name" value="SPOUT_MTase"/>
    <property type="match status" value="1"/>
</dbReference>
<dbReference type="PIRSF" id="PIRSF004505">
    <property type="entry name" value="MT_bac"/>
    <property type="match status" value="1"/>
</dbReference>
<dbReference type="SUPFAM" id="SSF75217">
    <property type="entry name" value="alpha/beta knot"/>
    <property type="match status" value="1"/>
</dbReference>
<proteinExistence type="inferred from homology"/>
<comment type="function">
    <text evidence="1">Specifically methylates the pseudouridine at position 1915 (m3Psi1915) in 23S rRNA.</text>
</comment>
<comment type="catalytic activity">
    <reaction evidence="1">
        <text>pseudouridine(1915) in 23S rRNA + S-adenosyl-L-methionine = N(3)-methylpseudouridine(1915) in 23S rRNA + S-adenosyl-L-homocysteine + H(+)</text>
        <dbReference type="Rhea" id="RHEA:42752"/>
        <dbReference type="Rhea" id="RHEA-COMP:10221"/>
        <dbReference type="Rhea" id="RHEA-COMP:10222"/>
        <dbReference type="ChEBI" id="CHEBI:15378"/>
        <dbReference type="ChEBI" id="CHEBI:57856"/>
        <dbReference type="ChEBI" id="CHEBI:59789"/>
        <dbReference type="ChEBI" id="CHEBI:65314"/>
        <dbReference type="ChEBI" id="CHEBI:74486"/>
        <dbReference type="EC" id="2.1.1.177"/>
    </reaction>
</comment>
<comment type="subcellular location">
    <subcellularLocation>
        <location evidence="1">Cytoplasm</location>
    </subcellularLocation>
</comment>
<comment type="similarity">
    <text evidence="1">Belongs to the RNA methyltransferase RlmH family.</text>
</comment>
<sequence>MNITIISVGKIKEKYLSDAINEYSKRISRYSKLDIIEVADEKTPESPSDVEKSKILEKEAERILKHLKKDSFVITLEILGKEVTSESLAKKINDLSISGKSDITFIIGGSLGLSKNISEISDFKLSFSKMTFPHQLMRVILLEQIYRSFRIINGEPYHK</sequence>
<name>RLMH_METM5</name>
<reference key="1">
    <citation type="submission" date="2007-03" db="EMBL/GenBank/DDBJ databases">
        <title>Complete sequence of chromosome of Methanococcus maripaludis C5.</title>
        <authorList>
            <consortium name="US DOE Joint Genome Institute"/>
            <person name="Copeland A."/>
            <person name="Lucas S."/>
            <person name="Lapidus A."/>
            <person name="Barry K."/>
            <person name="Glavina del Rio T."/>
            <person name="Dalin E."/>
            <person name="Tice H."/>
            <person name="Pitluck S."/>
            <person name="Chertkov O."/>
            <person name="Brettin T."/>
            <person name="Bruce D."/>
            <person name="Han C."/>
            <person name="Detter J.C."/>
            <person name="Schmutz J."/>
            <person name="Larimer F."/>
            <person name="Land M."/>
            <person name="Hauser L."/>
            <person name="Kyrpides N."/>
            <person name="Mikhailova N."/>
            <person name="Sieprawska-Lupa M."/>
            <person name="Whitman W.B."/>
            <person name="Richardson P."/>
        </authorList>
    </citation>
    <scope>NUCLEOTIDE SEQUENCE [LARGE SCALE GENOMIC DNA]</scope>
    <source>
        <strain>C5 / ATCC BAA-1333</strain>
    </source>
</reference>
<keyword id="KW-0963">Cytoplasm</keyword>
<keyword id="KW-0489">Methyltransferase</keyword>
<keyword id="KW-0698">rRNA processing</keyword>
<keyword id="KW-0949">S-adenosyl-L-methionine</keyword>
<keyword id="KW-0808">Transferase</keyword>
<protein>
    <recommendedName>
        <fullName evidence="1">Putative ribosomal RNA large subunit methyltransferase H</fullName>
        <ecNumber evidence="1">2.1.1.177</ecNumber>
    </recommendedName>
    <alternativeName>
        <fullName evidence="1">23S rRNA (pseudouridine1915-N3)-methyltransferase</fullName>
    </alternativeName>
    <alternativeName>
        <fullName evidence="1">rRNA (pseudouridine-N3-)-methyltransferase RlmH</fullName>
    </alternativeName>
</protein>
<accession>A4FXE1</accession>
<feature type="chain" id="PRO_1000061806" description="Putative ribosomal RNA large subunit methyltransferase H">
    <location>
        <begin position="1"/>
        <end position="159"/>
    </location>
</feature>
<feature type="binding site" evidence="1">
    <location>
        <position position="76"/>
    </location>
    <ligand>
        <name>S-adenosyl-L-methionine</name>
        <dbReference type="ChEBI" id="CHEBI:59789"/>
    </ligand>
</feature>
<feature type="binding site" evidence="1">
    <location>
        <position position="108"/>
    </location>
    <ligand>
        <name>S-adenosyl-L-methionine</name>
        <dbReference type="ChEBI" id="CHEBI:59789"/>
    </ligand>
</feature>
<feature type="binding site" evidence="1">
    <location>
        <begin position="127"/>
        <end position="132"/>
    </location>
    <ligand>
        <name>S-adenosyl-L-methionine</name>
        <dbReference type="ChEBI" id="CHEBI:59789"/>
    </ligand>
</feature>
<gene>
    <name evidence="1" type="primary">rlmH</name>
    <name type="ordered locus">MmarC5_0556</name>
</gene>
<evidence type="ECO:0000255" key="1">
    <source>
        <dbReference type="HAMAP-Rule" id="MF_00658"/>
    </source>
</evidence>